<gene>
    <name evidence="1" type="primary">gatC</name>
    <name type="ordered locus">Arth_1306</name>
</gene>
<protein>
    <recommendedName>
        <fullName evidence="1">Aspartyl/glutamyl-tRNA(Asn/Gln) amidotransferase subunit C</fullName>
        <shortName evidence="1">Asp/Glu-ADT subunit C</shortName>
        <ecNumber evidence="1">6.3.5.-</ecNumber>
    </recommendedName>
</protein>
<organism>
    <name type="scientific">Arthrobacter sp. (strain FB24)</name>
    <dbReference type="NCBI Taxonomy" id="290399"/>
    <lineage>
        <taxon>Bacteria</taxon>
        <taxon>Bacillati</taxon>
        <taxon>Actinomycetota</taxon>
        <taxon>Actinomycetes</taxon>
        <taxon>Micrococcales</taxon>
        <taxon>Micrococcaceae</taxon>
        <taxon>Arthrobacter</taxon>
    </lineage>
</organism>
<feature type="chain" id="PRO_1000016064" description="Aspartyl/glutamyl-tRNA(Asn/Gln) amidotransferase subunit C">
    <location>
        <begin position="1"/>
        <end position="98"/>
    </location>
</feature>
<evidence type="ECO:0000255" key="1">
    <source>
        <dbReference type="HAMAP-Rule" id="MF_00122"/>
    </source>
</evidence>
<comment type="function">
    <text evidence="1">Allows the formation of correctly charged Asn-tRNA(Asn) or Gln-tRNA(Gln) through the transamidation of misacylated Asp-tRNA(Asn) or Glu-tRNA(Gln) in organisms which lack either or both of asparaginyl-tRNA or glutaminyl-tRNA synthetases. The reaction takes place in the presence of glutamine and ATP through an activated phospho-Asp-tRNA(Asn) or phospho-Glu-tRNA(Gln).</text>
</comment>
<comment type="catalytic activity">
    <reaction evidence="1">
        <text>L-glutamyl-tRNA(Gln) + L-glutamine + ATP + H2O = L-glutaminyl-tRNA(Gln) + L-glutamate + ADP + phosphate + H(+)</text>
        <dbReference type="Rhea" id="RHEA:17521"/>
        <dbReference type="Rhea" id="RHEA-COMP:9681"/>
        <dbReference type="Rhea" id="RHEA-COMP:9684"/>
        <dbReference type="ChEBI" id="CHEBI:15377"/>
        <dbReference type="ChEBI" id="CHEBI:15378"/>
        <dbReference type="ChEBI" id="CHEBI:29985"/>
        <dbReference type="ChEBI" id="CHEBI:30616"/>
        <dbReference type="ChEBI" id="CHEBI:43474"/>
        <dbReference type="ChEBI" id="CHEBI:58359"/>
        <dbReference type="ChEBI" id="CHEBI:78520"/>
        <dbReference type="ChEBI" id="CHEBI:78521"/>
        <dbReference type="ChEBI" id="CHEBI:456216"/>
    </reaction>
</comment>
<comment type="catalytic activity">
    <reaction evidence="1">
        <text>L-aspartyl-tRNA(Asn) + L-glutamine + ATP + H2O = L-asparaginyl-tRNA(Asn) + L-glutamate + ADP + phosphate + 2 H(+)</text>
        <dbReference type="Rhea" id="RHEA:14513"/>
        <dbReference type="Rhea" id="RHEA-COMP:9674"/>
        <dbReference type="Rhea" id="RHEA-COMP:9677"/>
        <dbReference type="ChEBI" id="CHEBI:15377"/>
        <dbReference type="ChEBI" id="CHEBI:15378"/>
        <dbReference type="ChEBI" id="CHEBI:29985"/>
        <dbReference type="ChEBI" id="CHEBI:30616"/>
        <dbReference type="ChEBI" id="CHEBI:43474"/>
        <dbReference type="ChEBI" id="CHEBI:58359"/>
        <dbReference type="ChEBI" id="CHEBI:78515"/>
        <dbReference type="ChEBI" id="CHEBI:78516"/>
        <dbReference type="ChEBI" id="CHEBI:456216"/>
    </reaction>
</comment>
<comment type="subunit">
    <text evidence="1">Heterotrimer of A, B and C subunits.</text>
</comment>
<comment type="similarity">
    <text evidence="1">Belongs to the GatC family.</text>
</comment>
<name>GATC_ARTS2</name>
<accession>A0JUI0</accession>
<sequence length="98" mass="10486">MAAINRDDVAHLARLAHIEMSAEELDRMAGELAVIVESVKSVSEAAGDDVPATSHPIPLTNVFREDVVGHTFTAEQSLSGAPDAYEGRFKVPAILDED</sequence>
<reference key="1">
    <citation type="journal article" date="2013" name="Stand. Genomic Sci.">
        <title>Complete genome sequence of Arthrobacter sp. strain FB24.</title>
        <authorList>
            <person name="Nakatsu C.H."/>
            <person name="Barabote R."/>
            <person name="Thompson S."/>
            <person name="Bruce D."/>
            <person name="Detter C."/>
            <person name="Brettin T."/>
            <person name="Han C."/>
            <person name="Beasley F."/>
            <person name="Chen W."/>
            <person name="Konopka A."/>
            <person name="Xie G."/>
        </authorList>
    </citation>
    <scope>NUCLEOTIDE SEQUENCE [LARGE SCALE GENOMIC DNA]</scope>
    <source>
        <strain>FB24</strain>
    </source>
</reference>
<proteinExistence type="inferred from homology"/>
<dbReference type="EC" id="6.3.5.-" evidence="1"/>
<dbReference type="EMBL" id="CP000454">
    <property type="protein sequence ID" value="ABK02700.1"/>
    <property type="molecule type" value="Genomic_DNA"/>
</dbReference>
<dbReference type="RefSeq" id="WP_011691167.1">
    <property type="nucleotide sequence ID" value="NC_008541.1"/>
</dbReference>
<dbReference type="SMR" id="A0JUI0"/>
<dbReference type="STRING" id="290399.Arth_1306"/>
<dbReference type="KEGG" id="art:Arth_1306"/>
<dbReference type="eggNOG" id="COG0721">
    <property type="taxonomic scope" value="Bacteria"/>
</dbReference>
<dbReference type="HOGENOM" id="CLU_105899_1_0_11"/>
<dbReference type="OrthoDB" id="5295223at2"/>
<dbReference type="Proteomes" id="UP000000754">
    <property type="component" value="Chromosome"/>
</dbReference>
<dbReference type="GO" id="GO:0050566">
    <property type="term" value="F:asparaginyl-tRNA synthase (glutamine-hydrolyzing) activity"/>
    <property type="evidence" value="ECO:0007669"/>
    <property type="project" value="RHEA"/>
</dbReference>
<dbReference type="GO" id="GO:0005524">
    <property type="term" value="F:ATP binding"/>
    <property type="evidence" value="ECO:0007669"/>
    <property type="project" value="UniProtKB-KW"/>
</dbReference>
<dbReference type="GO" id="GO:0050567">
    <property type="term" value="F:glutaminyl-tRNA synthase (glutamine-hydrolyzing) activity"/>
    <property type="evidence" value="ECO:0007669"/>
    <property type="project" value="UniProtKB-UniRule"/>
</dbReference>
<dbReference type="GO" id="GO:0006450">
    <property type="term" value="P:regulation of translational fidelity"/>
    <property type="evidence" value="ECO:0007669"/>
    <property type="project" value="InterPro"/>
</dbReference>
<dbReference type="GO" id="GO:0006412">
    <property type="term" value="P:translation"/>
    <property type="evidence" value="ECO:0007669"/>
    <property type="project" value="UniProtKB-UniRule"/>
</dbReference>
<dbReference type="Gene3D" id="1.10.20.60">
    <property type="entry name" value="Glu-tRNAGln amidotransferase C subunit, N-terminal domain"/>
    <property type="match status" value="1"/>
</dbReference>
<dbReference type="HAMAP" id="MF_00122">
    <property type="entry name" value="GatC"/>
    <property type="match status" value="1"/>
</dbReference>
<dbReference type="InterPro" id="IPR036113">
    <property type="entry name" value="Asp/Glu-ADT_sf_sub_c"/>
</dbReference>
<dbReference type="InterPro" id="IPR003837">
    <property type="entry name" value="GatC"/>
</dbReference>
<dbReference type="NCBIfam" id="TIGR00135">
    <property type="entry name" value="gatC"/>
    <property type="match status" value="1"/>
</dbReference>
<dbReference type="Pfam" id="PF02686">
    <property type="entry name" value="GatC"/>
    <property type="match status" value="1"/>
</dbReference>
<dbReference type="SUPFAM" id="SSF141000">
    <property type="entry name" value="Glu-tRNAGln amidotransferase C subunit"/>
    <property type="match status" value="1"/>
</dbReference>
<keyword id="KW-0067">ATP-binding</keyword>
<keyword id="KW-0436">Ligase</keyword>
<keyword id="KW-0547">Nucleotide-binding</keyword>
<keyword id="KW-0648">Protein biosynthesis</keyword>
<keyword id="KW-1185">Reference proteome</keyword>